<evidence type="ECO:0000255" key="1">
    <source>
        <dbReference type="HAMAP-Rule" id="MF_00822"/>
    </source>
</evidence>
<evidence type="ECO:0000256" key="2">
    <source>
        <dbReference type="SAM" id="MobiDB-lite"/>
    </source>
</evidence>
<protein>
    <recommendedName>
        <fullName evidence="1">Urease accessory protein UreE 2</fullName>
    </recommendedName>
</protein>
<reference key="1">
    <citation type="journal article" date="2005" name="Proc. Natl. Acad. Sci. U.S.A.">
        <title>Comparison of the complete genome sequences of Pseudomonas syringae pv. syringae B728a and pv. tomato DC3000.</title>
        <authorList>
            <person name="Feil H."/>
            <person name="Feil W.S."/>
            <person name="Chain P."/>
            <person name="Larimer F."/>
            <person name="Dibartolo G."/>
            <person name="Copeland A."/>
            <person name="Lykidis A."/>
            <person name="Trong S."/>
            <person name="Nolan M."/>
            <person name="Goltsman E."/>
            <person name="Thiel J."/>
            <person name="Malfatti S."/>
            <person name="Loper J.E."/>
            <person name="Lapidus A."/>
            <person name="Detter J.C."/>
            <person name="Land M."/>
            <person name="Richardson P.M."/>
            <person name="Kyrpides N.C."/>
            <person name="Ivanova N."/>
            <person name="Lindow S.E."/>
        </authorList>
    </citation>
    <scope>NUCLEOTIDE SEQUENCE [LARGE SCALE GENOMIC DNA]</scope>
    <source>
        <strain>B728a</strain>
    </source>
</reference>
<proteinExistence type="inferred from homology"/>
<sequence>MLVIHDRIEPQAEWAAELHLNFEARSKSRLRCFSAENEDVGLFLQRGQSPLRDGEFLQAQDGRVVRVCARPEKLMHVTCSSTFELTRAAYHLGNRHVALQVGDGWLRLLDDYVLKAMLDQLGATVETIEAPFQPEHGAYGGGHHHSRAGEEDFNYPPRMHQFGVRK</sequence>
<gene>
    <name evidence="1" type="primary">ureE2</name>
    <name type="ordered locus">Psyr_4451</name>
</gene>
<comment type="function">
    <text evidence="1">Involved in urease metallocenter assembly. Binds nickel. Probably functions as a nickel donor during metallocenter assembly.</text>
</comment>
<comment type="subcellular location">
    <subcellularLocation>
        <location evidence="1">Cytoplasm</location>
    </subcellularLocation>
</comment>
<comment type="similarity">
    <text evidence="1">Belongs to the UreE family.</text>
</comment>
<feature type="chain" id="PRO_0000223426" description="Urease accessory protein UreE 2">
    <location>
        <begin position="1"/>
        <end position="166"/>
    </location>
</feature>
<feature type="region of interest" description="Disordered" evidence="2">
    <location>
        <begin position="135"/>
        <end position="154"/>
    </location>
</feature>
<name>UREE2_PSEU2</name>
<organism>
    <name type="scientific">Pseudomonas syringae pv. syringae (strain B728a)</name>
    <dbReference type="NCBI Taxonomy" id="205918"/>
    <lineage>
        <taxon>Bacteria</taxon>
        <taxon>Pseudomonadati</taxon>
        <taxon>Pseudomonadota</taxon>
        <taxon>Gammaproteobacteria</taxon>
        <taxon>Pseudomonadales</taxon>
        <taxon>Pseudomonadaceae</taxon>
        <taxon>Pseudomonas</taxon>
        <taxon>Pseudomonas syringae</taxon>
    </lineage>
</organism>
<keyword id="KW-0143">Chaperone</keyword>
<keyword id="KW-0963">Cytoplasm</keyword>
<keyword id="KW-0533">Nickel</keyword>
<keyword id="KW-0996">Nickel insertion</keyword>
<dbReference type="EMBL" id="CP000075">
    <property type="protein sequence ID" value="AAY39481.1"/>
    <property type="molecule type" value="Genomic_DNA"/>
</dbReference>
<dbReference type="RefSeq" id="YP_237519.1">
    <property type="nucleotide sequence ID" value="NC_007005.1"/>
</dbReference>
<dbReference type="SMR" id="Q4ZMZ1"/>
<dbReference type="STRING" id="205918.Psyr_4451"/>
<dbReference type="KEGG" id="psb:Psyr_4451"/>
<dbReference type="PATRIC" id="fig|205918.7.peg.4592"/>
<dbReference type="eggNOG" id="COG2371">
    <property type="taxonomic scope" value="Bacteria"/>
</dbReference>
<dbReference type="HOGENOM" id="CLU_093757_2_0_6"/>
<dbReference type="OrthoDB" id="5421304at2"/>
<dbReference type="Proteomes" id="UP000000426">
    <property type="component" value="Chromosome"/>
</dbReference>
<dbReference type="GO" id="GO:0005737">
    <property type="term" value="C:cytoplasm"/>
    <property type="evidence" value="ECO:0007669"/>
    <property type="project" value="UniProtKB-SubCell"/>
</dbReference>
<dbReference type="GO" id="GO:0016151">
    <property type="term" value="F:nickel cation binding"/>
    <property type="evidence" value="ECO:0007669"/>
    <property type="project" value="UniProtKB-UniRule"/>
</dbReference>
<dbReference type="GO" id="GO:0051082">
    <property type="term" value="F:unfolded protein binding"/>
    <property type="evidence" value="ECO:0007669"/>
    <property type="project" value="UniProtKB-UniRule"/>
</dbReference>
<dbReference type="GO" id="GO:0006457">
    <property type="term" value="P:protein folding"/>
    <property type="evidence" value="ECO:0007669"/>
    <property type="project" value="InterPro"/>
</dbReference>
<dbReference type="GO" id="GO:0065003">
    <property type="term" value="P:protein-containing complex assembly"/>
    <property type="evidence" value="ECO:0007669"/>
    <property type="project" value="InterPro"/>
</dbReference>
<dbReference type="GO" id="GO:0019627">
    <property type="term" value="P:urea metabolic process"/>
    <property type="evidence" value="ECO:0007669"/>
    <property type="project" value="InterPro"/>
</dbReference>
<dbReference type="CDD" id="cd00571">
    <property type="entry name" value="UreE"/>
    <property type="match status" value="1"/>
</dbReference>
<dbReference type="Gene3D" id="2.60.260.20">
    <property type="entry name" value="Urease metallochaperone UreE, N-terminal domain"/>
    <property type="match status" value="1"/>
</dbReference>
<dbReference type="Gene3D" id="3.30.70.790">
    <property type="entry name" value="UreE, C-terminal domain"/>
    <property type="match status" value="1"/>
</dbReference>
<dbReference type="HAMAP" id="MF_00822">
    <property type="entry name" value="UreE"/>
    <property type="match status" value="1"/>
</dbReference>
<dbReference type="InterPro" id="IPR012406">
    <property type="entry name" value="UreE"/>
</dbReference>
<dbReference type="InterPro" id="IPR007864">
    <property type="entry name" value="UreE_C_dom"/>
</dbReference>
<dbReference type="InterPro" id="IPR004029">
    <property type="entry name" value="UreE_N"/>
</dbReference>
<dbReference type="InterPro" id="IPR036118">
    <property type="entry name" value="UreE_N_sf"/>
</dbReference>
<dbReference type="NCBIfam" id="NF009751">
    <property type="entry name" value="PRK13261.1-1"/>
    <property type="match status" value="1"/>
</dbReference>
<dbReference type="NCBIfam" id="NF009753">
    <property type="entry name" value="PRK13261.1-5"/>
    <property type="match status" value="1"/>
</dbReference>
<dbReference type="Pfam" id="PF05194">
    <property type="entry name" value="UreE_C"/>
    <property type="match status" value="1"/>
</dbReference>
<dbReference type="Pfam" id="PF02814">
    <property type="entry name" value="UreE_N"/>
    <property type="match status" value="1"/>
</dbReference>
<dbReference type="PIRSF" id="PIRSF036402">
    <property type="entry name" value="Ureas_acces_UreE"/>
    <property type="match status" value="1"/>
</dbReference>
<dbReference type="SMART" id="SM00988">
    <property type="entry name" value="UreE_N"/>
    <property type="match status" value="1"/>
</dbReference>
<dbReference type="SUPFAM" id="SSF69737">
    <property type="entry name" value="Urease metallochaperone UreE, C-terminal domain"/>
    <property type="match status" value="1"/>
</dbReference>
<dbReference type="SUPFAM" id="SSF69287">
    <property type="entry name" value="Urease metallochaperone UreE, N-terminal domain"/>
    <property type="match status" value="1"/>
</dbReference>
<accession>Q4ZMZ1</accession>